<dbReference type="EC" id="2.6.1.9" evidence="1"/>
<dbReference type="EMBL" id="CP000384">
    <property type="protein sequence ID" value="ABG09169.1"/>
    <property type="molecule type" value="Genomic_DNA"/>
</dbReference>
<dbReference type="SMR" id="Q1B7G5"/>
<dbReference type="KEGG" id="mmc:Mmcs_3062"/>
<dbReference type="HOGENOM" id="CLU_017584_3_1_11"/>
<dbReference type="BioCyc" id="MSP164756:G1G6O-3125-MONOMER"/>
<dbReference type="UniPathway" id="UPA00031">
    <property type="reaction ID" value="UER00012"/>
</dbReference>
<dbReference type="GO" id="GO:0004400">
    <property type="term" value="F:histidinol-phosphate transaminase activity"/>
    <property type="evidence" value="ECO:0007669"/>
    <property type="project" value="UniProtKB-UniRule"/>
</dbReference>
<dbReference type="GO" id="GO:0030170">
    <property type="term" value="F:pyridoxal phosphate binding"/>
    <property type="evidence" value="ECO:0007669"/>
    <property type="project" value="InterPro"/>
</dbReference>
<dbReference type="GO" id="GO:0000105">
    <property type="term" value="P:L-histidine biosynthetic process"/>
    <property type="evidence" value="ECO:0007669"/>
    <property type="project" value="UniProtKB-UniRule"/>
</dbReference>
<dbReference type="CDD" id="cd00609">
    <property type="entry name" value="AAT_like"/>
    <property type="match status" value="1"/>
</dbReference>
<dbReference type="Gene3D" id="3.90.1150.10">
    <property type="entry name" value="Aspartate Aminotransferase, domain 1"/>
    <property type="match status" value="1"/>
</dbReference>
<dbReference type="Gene3D" id="3.40.640.10">
    <property type="entry name" value="Type I PLP-dependent aspartate aminotransferase-like (Major domain)"/>
    <property type="match status" value="1"/>
</dbReference>
<dbReference type="HAMAP" id="MF_01023">
    <property type="entry name" value="HisC_aminotrans_2"/>
    <property type="match status" value="1"/>
</dbReference>
<dbReference type="InterPro" id="IPR001917">
    <property type="entry name" value="Aminotrans_II_pyridoxalP_BS"/>
</dbReference>
<dbReference type="InterPro" id="IPR004839">
    <property type="entry name" value="Aminotransferase_I/II_large"/>
</dbReference>
<dbReference type="InterPro" id="IPR005861">
    <property type="entry name" value="HisP_aminotrans"/>
</dbReference>
<dbReference type="InterPro" id="IPR015424">
    <property type="entry name" value="PyrdxlP-dep_Trfase"/>
</dbReference>
<dbReference type="InterPro" id="IPR015421">
    <property type="entry name" value="PyrdxlP-dep_Trfase_major"/>
</dbReference>
<dbReference type="InterPro" id="IPR015422">
    <property type="entry name" value="PyrdxlP-dep_Trfase_small"/>
</dbReference>
<dbReference type="NCBIfam" id="TIGR01141">
    <property type="entry name" value="hisC"/>
    <property type="match status" value="1"/>
</dbReference>
<dbReference type="NCBIfam" id="NF002877">
    <property type="entry name" value="PRK03317.1"/>
    <property type="match status" value="1"/>
</dbReference>
<dbReference type="PANTHER" id="PTHR42885:SF2">
    <property type="entry name" value="HISTIDINOL-PHOSPHATE AMINOTRANSFERASE"/>
    <property type="match status" value="1"/>
</dbReference>
<dbReference type="PANTHER" id="PTHR42885">
    <property type="entry name" value="HISTIDINOL-PHOSPHATE AMINOTRANSFERASE-RELATED"/>
    <property type="match status" value="1"/>
</dbReference>
<dbReference type="Pfam" id="PF00155">
    <property type="entry name" value="Aminotran_1_2"/>
    <property type="match status" value="1"/>
</dbReference>
<dbReference type="SUPFAM" id="SSF53383">
    <property type="entry name" value="PLP-dependent transferases"/>
    <property type="match status" value="1"/>
</dbReference>
<dbReference type="PROSITE" id="PS00599">
    <property type="entry name" value="AA_TRANSFER_CLASS_2"/>
    <property type="match status" value="1"/>
</dbReference>
<evidence type="ECO:0000255" key="1">
    <source>
        <dbReference type="HAMAP-Rule" id="MF_01023"/>
    </source>
</evidence>
<sequence length="377" mass="40678">MTVGERITLADLPLRDDLRGKSPYGAPQLQVPVRLNTNENPHPPSQALVDDVTRSVGEAAAELHRYPDRDAVALRSDLADYLNLRTGVELSVENLWAANGSNEVLQQLLQAFGGPGRSAIGFVPSYSMHPIIADATRTEWLQALRADDFGLDVDTAVREIAARRPDLVFVTSPNNPSGQSVPLEDLRRLLDAMETGILILDEAYGEFSSQPSGVALIDQYPTKLVVSRTMSKAFAFAGGRLGYLVAAPAVIEAMLLVRLPYHLSSLTQAAARAALRHADDTLASVATLIAERDRVANGLSQLGFRVVPSDANFILFGEFADAPATWRRYLDQGVLIRDVGIPGYLRTTIGLAEENDALLTASARLVETELAATLGAL</sequence>
<accession>Q1B7G5</accession>
<feature type="chain" id="PRO_0000319778" description="Histidinol-phosphate aminotransferase">
    <location>
        <begin position="1"/>
        <end position="377"/>
    </location>
</feature>
<feature type="modified residue" description="N6-(pyridoxal phosphate)lysine" evidence="1">
    <location>
        <position position="232"/>
    </location>
</feature>
<keyword id="KW-0028">Amino-acid biosynthesis</keyword>
<keyword id="KW-0032">Aminotransferase</keyword>
<keyword id="KW-0368">Histidine biosynthesis</keyword>
<keyword id="KW-0663">Pyridoxal phosphate</keyword>
<keyword id="KW-0808">Transferase</keyword>
<name>HIS8_MYCSS</name>
<protein>
    <recommendedName>
        <fullName evidence="1">Histidinol-phosphate aminotransferase</fullName>
        <ecNumber evidence="1">2.6.1.9</ecNumber>
    </recommendedName>
    <alternativeName>
        <fullName evidence="1">Imidazole acetol-phosphate transaminase</fullName>
    </alternativeName>
</protein>
<gene>
    <name evidence="1" type="primary">hisC</name>
    <name type="ordered locus">Mmcs_3062</name>
</gene>
<proteinExistence type="inferred from homology"/>
<organism>
    <name type="scientific">Mycobacterium sp. (strain MCS)</name>
    <dbReference type="NCBI Taxonomy" id="164756"/>
    <lineage>
        <taxon>Bacteria</taxon>
        <taxon>Bacillati</taxon>
        <taxon>Actinomycetota</taxon>
        <taxon>Actinomycetes</taxon>
        <taxon>Mycobacteriales</taxon>
        <taxon>Mycobacteriaceae</taxon>
        <taxon>Mycobacterium</taxon>
    </lineage>
</organism>
<comment type="catalytic activity">
    <reaction evidence="1">
        <text>L-histidinol phosphate + 2-oxoglutarate = 3-(imidazol-4-yl)-2-oxopropyl phosphate + L-glutamate</text>
        <dbReference type="Rhea" id="RHEA:23744"/>
        <dbReference type="ChEBI" id="CHEBI:16810"/>
        <dbReference type="ChEBI" id="CHEBI:29985"/>
        <dbReference type="ChEBI" id="CHEBI:57766"/>
        <dbReference type="ChEBI" id="CHEBI:57980"/>
        <dbReference type="EC" id="2.6.1.9"/>
    </reaction>
</comment>
<comment type="cofactor">
    <cofactor evidence="1">
        <name>pyridoxal 5'-phosphate</name>
        <dbReference type="ChEBI" id="CHEBI:597326"/>
    </cofactor>
</comment>
<comment type="pathway">
    <text evidence="1">Amino-acid biosynthesis; L-histidine biosynthesis; L-histidine from 5-phospho-alpha-D-ribose 1-diphosphate: step 7/9.</text>
</comment>
<comment type="subunit">
    <text evidence="1">Homodimer.</text>
</comment>
<comment type="similarity">
    <text evidence="1">Belongs to the class-II pyridoxal-phosphate-dependent aminotransferase family. Histidinol-phosphate aminotransferase subfamily.</text>
</comment>
<reference key="1">
    <citation type="submission" date="2006-06" db="EMBL/GenBank/DDBJ databases">
        <title>Complete sequence of chromosome of Mycobacterium sp. MCS.</title>
        <authorList>
            <consortium name="US DOE Joint Genome Institute"/>
            <person name="Copeland A."/>
            <person name="Lucas S."/>
            <person name="Lapidus A."/>
            <person name="Barry K."/>
            <person name="Detter J.C."/>
            <person name="Glavina del Rio T."/>
            <person name="Hammon N."/>
            <person name="Israni S."/>
            <person name="Dalin E."/>
            <person name="Tice H."/>
            <person name="Pitluck S."/>
            <person name="Martinez M."/>
            <person name="Schmutz J."/>
            <person name="Larimer F."/>
            <person name="Land M."/>
            <person name="Hauser L."/>
            <person name="Kyrpides N."/>
            <person name="Kim E."/>
            <person name="Miller C.D."/>
            <person name="Hughes J.E."/>
            <person name="Anderson A.J."/>
            <person name="Sims R.C."/>
            <person name="Richardson P."/>
        </authorList>
    </citation>
    <scope>NUCLEOTIDE SEQUENCE [LARGE SCALE GENOMIC DNA]</scope>
    <source>
        <strain>MCS</strain>
    </source>
</reference>